<organism>
    <name type="scientific">Rhizobium meliloti (strain 1021)</name>
    <name type="common">Ensifer meliloti</name>
    <name type="synonym">Sinorhizobium meliloti</name>
    <dbReference type="NCBI Taxonomy" id="266834"/>
    <lineage>
        <taxon>Bacteria</taxon>
        <taxon>Pseudomonadati</taxon>
        <taxon>Pseudomonadota</taxon>
        <taxon>Alphaproteobacteria</taxon>
        <taxon>Hyphomicrobiales</taxon>
        <taxon>Rhizobiaceae</taxon>
        <taxon>Sinorhizobium/Ensifer group</taxon>
        <taxon>Sinorhizobium</taxon>
    </lineage>
</organism>
<proteinExistence type="inferred from homology"/>
<keyword id="KW-0030">Aminoacyl-tRNA synthetase</keyword>
<keyword id="KW-0067">ATP-binding</keyword>
<keyword id="KW-0963">Cytoplasm</keyword>
<keyword id="KW-0436">Ligase</keyword>
<keyword id="KW-0547">Nucleotide-binding</keyword>
<keyword id="KW-0648">Protein biosynthesis</keyword>
<keyword id="KW-1185">Reference proteome</keyword>
<accession>Q92PX0</accession>
<gene>
    <name evidence="1" type="primary">metG</name>
    <name type="synonym">metS</name>
    <name type="ordered locus">R01601</name>
    <name type="ORF">SMc01192</name>
</gene>
<reference key="1">
    <citation type="journal article" date="2001" name="Proc. Natl. Acad. Sci. U.S.A.">
        <title>Analysis of the chromosome sequence of the legume symbiont Sinorhizobium meliloti strain 1021.</title>
        <authorList>
            <person name="Capela D."/>
            <person name="Barloy-Hubler F."/>
            <person name="Gouzy J."/>
            <person name="Bothe G."/>
            <person name="Ampe F."/>
            <person name="Batut J."/>
            <person name="Boistard P."/>
            <person name="Becker A."/>
            <person name="Boutry M."/>
            <person name="Cadieu E."/>
            <person name="Dreano S."/>
            <person name="Gloux S."/>
            <person name="Godrie T."/>
            <person name="Goffeau A."/>
            <person name="Kahn D."/>
            <person name="Kiss E."/>
            <person name="Lelaure V."/>
            <person name="Masuy D."/>
            <person name="Pohl T."/>
            <person name="Portetelle D."/>
            <person name="Puehler A."/>
            <person name="Purnelle B."/>
            <person name="Ramsperger U."/>
            <person name="Renard C."/>
            <person name="Thebault P."/>
            <person name="Vandenbol M."/>
            <person name="Weidner S."/>
            <person name="Galibert F."/>
        </authorList>
    </citation>
    <scope>NUCLEOTIDE SEQUENCE [LARGE SCALE GENOMIC DNA]</scope>
    <source>
        <strain>1021</strain>
    </source>
</reference>
<reference key="2">
    <citation type="journal article" date="2001" name="Science">
        <title>The composite genome of the legume symbiont Sinorhizobium meliloti.</title>
        <authorList>
            <person name="Galibert F."/>
            <person name="Finan T.M."/>
            <person name="Long S.R."/>
            <person name="Puehler A."/>
            <person name="Abola P."/>
            <person name="Ampe F."/>
            <person name="Barloy-Hubler F."/>
            <person name="Barnett M.J."/>
            <person name="Becker A."/>
            <person name="Boistard P."/>
            <person name="Bothe G."/>
            <person name="Boutry M."/>
            <person name="Bowser L."/>
            <person name="Buhrmester J."/>
            <person name="Cadieu E."/>
            <person name="Capela D."/>
            <person name="Chain P."/>
            <person name="Cowie A."/>
            <person name="Davis R.W."/>
            <person name="Dreano S."/>
            <person name="Federspiel N.A."/>
            <person name="Fisher R.F."/>
            <person name="Gloux S."/>
            <person name="Godrie T."/>
            <person name="Goffeau A."/>
            <person name="Golding B."/>
            <person name="Gouzy J."/>
            <person name="Gurjal M."/>
            <person name="Hernandez-Lucas I."/>
            <person name="Hong A."/>
            <person name="Huizar L."/>
            <person name="Hyman R.W."/>
            <person name="Jones T."/>
            <person name="Kahn D."/>
            <person name="Kahn M.L."/>
            <person name="Kalman S."/>
            <person name="Keating D.H."/>
            <person name="Kiss E."/>
            <person name="Komp C."/>
            <person name="Lelaure V."/>
            <person name="Masuy D."/>
            <person name="Palm C."/>
            <person name="Peck M.C."/>
            <person name="Pohl T.M."/>
            <person name="Portetelle D."/>
            <person name="Purnelle B."/>
            <person name="Ramsperger U."/>
            <person name="Surzycki R."/>
            <person name="Thebault P."/>
            <person name="Vandenbol M."/>
            <person name="Vorhoelter F.J."/>
            <person name="Weidner S."/>
            <person name="Wells D.H."/>
            <person name="Wong K."/>
            <person name="Yeh K.-C."/>
            <person name="Batut J."/>
        </authorList>
    </citation>
    <scope>NUCLEOTIDE SEQUENCE [LARGE SCALE GENOMIC DNA]</scope>
    <source>
        <strain>1021</strain>
    </source>
</reference>
<sequence>MRDTSPFYITTAISYPNGKPHIGHAYELIATDAMARFQRLDGREVFFLTGTDEHGQKMQQTAKKEGISPQELAARNSAEFQNMARLLNASNDDFIRTTEQRHHEASQAIWMRMGEAGDLYKDSYAGWYSVRDEAYYQENETELRGDGVRYGPQGTPVEWVEEESYFFRLSAYQDKLLKHYEENPDFIGPAERRNEVISFVKSGLKDLSVSRTTFDWGIKVPNDPSHVMYVWVDALTNYVTATGCLTDPTGPRAKFWPANIHVIGKDIIRFHAVYWPAFLMSAGLPLPKRVFAHGFLLNKGEKMSKSLGNVVDPFNLVEHFGLDQIRYFFLREVSFGQDGSYSEEGIATRINSDLANGIGNLASRSLSMIVKNCDGQVPLCGPLTDEDKAMLAAADSLIGTAREEMGKQLIHRALAAIIAVVSETDRYFAGQEPWALKKTDPSRMATVLYVTAEVVRQVAILLQPFMPESAGKLLDLVAVPTDRRDFAHLGEAGRLVSGTPLEAPKPVFPRYVAPEA</sequence>
<feature type="chain" id="PRO_0000139236" description="Methionine--tRNA ligase">
    <location>
        <begin position="1"/>
        <end position="516"/>
    </location>
</feature>
<feature type="short sequence motif" description="'HIGH' region">
    <location>
        <begin position="14"/>
        <end position="24"/>
    </location>
</feature>
<feature type="short sequence motif" description="'KMSKS' region">
    <location>
        <begin position="302"/>
        <end position="306"/>
    </location>
</feature>
<feature type="binding site" evidence="1">
    <location>
        <position position="305"/>
    </location>
    <ligand>
        <name>ATP</name>
        <dbReference type="ChEBI" id="CHEBI:30616"/>
    </ligand>
</feature>
<name>SYM_RHIME</name>
<dbReference type="EC" id="6.1.1.10" evidence="1"/>
<dbReference type="EMBL" id="AL591688">
    <property type="protein sequence ID" value="CAC46180.1"/>
    <property type="molecule type" value="Genomic_DNA"/>
</dbReference>
<dbReference type="RefSeq" id="NP_385707.1">
    <property type="nucleotide sequence ID" value="NC_003047.1"/>
</dbReference>
<dbReference type="RefSeq" id="WP_010969336.1">
    <property type="nucleotide sequence ID" value="NC_003047.1"/>
</dbReference>
<dbReference type="SMR" id="Q92PX0"/>
<dbReference type="EnsemblBacteria" id="CAC46180">
    <property type="protein sequence ID" value="CAC46180"/>
    <property type="gene ID" value="SMc01192"/>
</dbReference>
<dbReference type="KEGG" id="sme:SMc01192"/>
<dbReference type="PATRIC" id="fig|266834.11.peg.3030"/>
<dbReference type="eggNOG" id="COG0143">
    <property type="taxonomic scope" value="Bacteria"/>
</dbReference>
<dbReference type="HOGENOM" id="CLU_009710_9_4_5"/>
<dbReference type="OrthoDB" id="9810191at2"/>
<dbReference type="Proteomes" id="UP000001976">
    <property type="component" value="Chromosome"/>
</dbReference>
<dbReference type="GO" id="GO:0005737">
    <property type="term" value="C:cytoplasm"/>
    <property type="evidence" value="ECO:0007669"/>
    <property type="project" value="UniProtKB-SubCell"/>
</dbReference>
<dbReference type="GO" id="GO:0005524">
    <property type="term" value="F:ATP binding"/>
    <property type="evidence" value="ECO:0007669"/>
    <property type="project" value="UniProtKB-UniRule"/>
</dbReference>
<dbReference type="GO" id="GO:0004825">
    <property type="term" value="F:methionine-tRNA ligase activity"/>
    <property type="evidence" value="ECO:0007669"/>
    <property type="project" value="UniProtKB-UniRule"/>
</dbReference>
<dbReference type="GO" id="GO:0006431">
    <property type="term" value="P:methionyl-tRNA aminoacylation"/>
    <property type="evidence" value="ECO:0007669"/>
    <property type="project" value="UniProtKB-UniRule"/>
</dbReference>
<dbReference type="CDD" id="cd07957">
    <property type="entry name" value="Anticodon_Ia_Met"/>
    <property type="match status" value="1"/>
</dbReference>
<dbReference type="CDD" id="cd00814">
    <property type="entry name" value="MetRS_core"/>
    <property type="match status" value="1"/>
</dbReference>
<dbReference type="FunFam" id="2.170.220.10:FF:000002">
    <property type="entry name" value="Methionine--tRNA ligase"/>
    <property type="match status" value="1"/>
</dbReference>
<dbReference type="Gene3D" id="2.170.220.10">
    <property type="match status" value="1"/>
</dbReference>
<dbReference type="Gene3D" id="3.40.50.620">
    <property type="entry name" value="HUPs"/>
    <property type="match status" value="1"/>
</dbReference>
<dbReference type="Gene3D" id="1.10.730.10">
    <property type="entry name" value="Isoleucyl-tRNA Synthetase, Domain 1"/>
    <property type="match status" value="1"/>
</dbReference>
<dbReference type="HAMAP" id="MF_01228">
    <property type="entry name" value="Met_tRNA_synth_type2"/>
    <property type="match status" value="1"/>
</dbReference>
<dbReference type="InterPro" id="IPR001412">
    <property type="entry name" value="aa-tRNA-synth_I_CS"/>
</dbReference>
<dbReference type="InterPro" id="IPR041872">
    <property type="entry name" value="Anticodon_Met"/>
</dbReference>
<dbReference type="InterPro" id="IPR014758">
    <property type="entry name" value="Met-tRNA_synth"/>
</dbReference>
<dbReference type="InterPro" id="IPR023457">
    <property type="entry name" value="Met-tRNA_synth_2"/>
</dbReference>
<dbReference type="InterPro" id="IPR015413">
    <property type="entry name" value="Methionyl/Leucyl_tRNA_Synth"/>
</dbReference>
<dbReference type="InterPro" id="IPR033911">
    <property type="entry name" value="MetRS_core"/>
</dbReference>
<dbReference type="InterPro" id="IPR014729">
    <property type="entry name" value="Rossmann-like_a/b/a_fold"/>
</dbReference>
<dbReference type="InterPro" id="IPR009080">
    <property type="entry name" value="tRNAsynth_Ia_anticodon-bd"/>
</dbReference>
<dbReference type="NCBIfam" id="TIGR00398">
    <property type="entry name" value="metG"/>
    <property type="match status" value="1"/>
</dbReference>
<dbReference type="NCBIfam" id="NF008900">
    <property type="entry name" value="PRK12267.1"/>
    <property type="match status" value="1"/>
</dbReference>
<dbReference type="PANTHER" id="PTHR43326:SF1">
    <property type="entry name" value="METHIONINE--TRNA LIGASE, MITOCHONDRIAL"/>
    <property type="match status" value="1"/>
</dbReference>
<dbReference type="PANTHER" id="PTHR43326">
    <property type="entry name" value="METHIONYL-TRNA SYNTHETASE"/>
    <property type="match status" value="1"/>
</dbReference>
<dbReference type="Pfam" id="PF19303">
    <property type="entry name" value="Anticodon_3"/>
    <property type="match status" value="1"/>
</dbReference>
<dbReference type="Pfam" id="PF09334">
    <property type="entry name" value="tRNA-synt_1g"/>
    <property type="match status" value="1"/>
</dbReference>
<dbReference type="PRINTS" id="PR01041">
    <property type="entry name" value="TRNASYNTHMET"/>
</dbReference>
<dbReference type="SUPFAM" id="SSF47323">
    <property type="entry name" value="Anticodon-binding domain of a subclass of class I aminoacyl-tRNA synthetases"/>
    <property type="match status" value="1"/>
</dbReference>
<dbReference type="SUPFAM" id="SSF52374">
    <property type="entry name" value="Nucleotidylyl transferase"/>
    <property type="match status" value="1"/>
</dbReference>
<dbReference type="PROSITE" id="PS00178">
    <property type="entry name" value="AA_TRNA_LIGASE_I"/>
    <property type="match status" value="1"/>
</dbReference>
<comment type="function">
    <text evidence="1">Is required not only for elongation of protein synthesis but also for the initiation of all mRNA translation through initiator tRNA(fMet) aminoacylation.</text>
</comment>
<comment type="catalytic activity">
    <reaction evidence="1">
        <text>tRNA(Met) + L-methionine + ATP = L-methionyl-tRNA(Met) + AMP + diphosphate</text>
        <dbReference type="Rhea" id="RHEA:13481"/>
        <dbReference type="Rhea" id="RHEA-COMP:9667"/>
        <dbReference type="Rhea" id="RHEA-COMP:9698"/>
        <dbReference type="ChEBI" id="CHEBI:30616"/>
        <dbReference type="ChEBI" id="CHEBI:33019"/>
        <dbReference type="ChEBI" id="CHEBI:57844"/>
        <dbReference type="ChEBI" id="CHEBI:78442"/>
        <dbReference type="ChEBI" id="CHEBI:78530"/>
        <dbReference type="ChEBI" id="CHEBI:456215"/>
        <dbReference type="EC" id="6.1.1.10"/>
    </reaction>
</comment>
<comment type="subunit">
    <text evidence="1">Monomer.</text>
</comment>
<comment type="subcellular location">
    <subcellularLocation>
        <location evidence="1">Cytoplasm</location>
    </subcellularLocation>
</comment>
<comment type="similarity">
    <text evidence="1">Belongs to the class-I aminoacyl-tRNA synthetase family. MetG type 2B subfamily.</text>
</comment>
<protein>
    <recommendedName>
        <fullName evidence="1">Methionine--tRNA ligase</fullName>
        <ecNumber evidence="1">6.1.1.10</ecNumber>
    </recommendedName>
    <alternativeName>
        <fullName evidence="1">Methionyl-tRNA synthetase</fullName>
        <shortName evidence="1">MetRS</shortName>
    </alternativeName>
</protein>
<evidence type="ECO:0000255" key="1">
    <source>
        <dbReference type="HAMAP-Rule" id="MF_01228"/>
    </source>
</evidence>